<sequence>MSKALPLRLGVNVDHVATLRNARGGKHPDPVRAALAAIEAGADGITAHLREDRRHIRDADMARLKAEISKPLNFEMAATPDMVQIALATKPHAVCLVPERREEVTTEGGLDVIGHHNTLAPFIARFNDAGIRTSLFIAADPAQIEMAAELHAPVIEIHTGAWCDAVEAGNAVKAEAEWQRIVAGAKLAQSVGLEVHGGHGLDYATAQTISALPQIAELNIGFHLMGEALFVGLTESIRRMRAAMARGRQALEATA</sequence>
<proteinExistence type="inferred from homology"/>
<keyword id="KW-0963">Cytoplasm</keyword>
<keyword id="KW-0664">Pyridoxine biosynthesis</keyword>
<keyword id="KW-0808">Transferase</keyword>
<comment type="function">
    <text evidence="1">Catalyzes the complicated ring closure reaction between the two acyclic compounds 1-deoxy-D-xylulose-5-phosphate (DXP) and 3-amino-2-oxopropyl phosphate (1-amino-acetone-3-phosphate or AAP) to form pyridoxine 5'-phosphate (PNP) and inorganic phosphate.</text>
</comment>
<comment type="catalytic activity">
    <reaction evidence="1">
        <text>3-amino-2-oxopropyl phosphate + 1-deoxy-D-xylulose 5-phosphate = pyridoxine 5'-phosphate + phosphate + 2 H2O + H(+)</text>
        <dbReference type="Rhea" id="RHEA:15265"/>
        <dbReference type="ChEBI" id="CHEBI:15377"/>
        <dbReference type="ChEBI" id="CHEBI:15378"/>
        <dbReference type="ChEBI" id="CHEBI:43474"/>
        <dbReference type="ChEBI" id="CHEBI:57279"/>
        <dbReference type="ChEBI" id="CHEBI:57792"/>
        <dbReference type="ChEBI" id="CHEBI:58589"/>
        <dbReference type="EC" id="2.6.99.2"/>
    </reaction>
</comment>
<comment type="pathway">
    <text evidence="1">Cofactor biosynthesis; pyridoxine 5'-phosphate biosynthesis; pyridoxine 5'-phosphate from D-erythrose 4-phosphate: step 5/5.</text>
</comment>
<comment type="subunit">
    <text evidence="1">Homooctamer; tetramer of dimers.</text>
</comment>
<comment type="subcellular location">
    <subcellularLocation>
        <location evidence="1">Cytoplasm</location>
    </subcellularLocation>
</comment>
<comment type="similarity">
    <text evidence="1">Belongs to the PNP synthase family.</text>
</comment>
<accession>Q214J9</accession>
<gene>
    <name evidence="1" type="primary">pdxJ</name>
    <name type="ordered locus">RPC_2637</name>
</gene>
<protein>
    <recommendedName>
        <fullName evidence="1">Pyridoxine 5'-phosphate synthase</fullName>
        <shortName evidence="1">PNP synthase</shortName>
        <ecNumber evidence="1">2.6.99.2</ecNumber>
    </recommendedName>
</protein>
<feature type="chain" id="PRO_1000022399" description="Pyridoxine 5'-phosphate synthase">
    <location>
        <begin position="1"/>
        <end position="255"/>
    </location>
</feature>
<feature type="active site" description="Proton acceptor" evidence="1">
    <location>
        <position position="48"/>
    </location>
</feature>
<feature type="active site" description="Proton acceptor" evidence="1">
    <location>
        <position position="75"/>
    </location>
</feature>
<feature type="active site" description="Proton donor" evidence="1">
    <location>
        <position position="199"/>
    </location>
</feature>
<feature type="binding site" evidence="1">
    <location>
        <position position="12"/>
    </location>
    <ligand>
        <name>3-amino-2-oxopropyl phosphate</name>
        <dbReference type="ChEBI" id="CHEBI:57279"/>
    </ligand>
</feature>
<feature type="binding site" evidence="1">
    <location>
        <begin position="14"/>
        <end position="15"/>
    </location>
    <ligand>
        <name>1-deoxy-D-xylulose 5-phosphate</name>
        <dbReference type="ChEBI" id="CHEBI:57792"/>
    </ligand>
</feature>
<feature type="binding site" evidence="1">
    <location>
        <position position="23"/>
    </location>
    <ligand>
        <name>3-amino-2-oxopropyl phosphate</name>
        <dbReference type="ChEBI" id="CHEBI:57279"/>
    </ligand>
</feature>
<feature type="binding site" evidence="1">
    <location>
        <position position="50"/>
    </location>
    <ligand>
        <name>1-deoxy-D-xylulose 5-phosphate</name>
        <dbReference type="ChEBI" id="CHEBI:57792"/>
    </ligand>
</feature>
<feature type="binding site" evidence="1">
    <location>
        <position position="55"/>
    </location>
    <ligand>
        <name>1-deoxy-D-xylulose 5-phosphate</name>
        <dbReference type="ChEBI" id="CHEBI:57792"/>
    </ligand>
</feature>
<feature type="binding site" evidence="1">
    <location>
        <position position="105"/>
    </location>
    <ligand>
        <name>1-deoxy-D-xylulose 5-phosphate</name>
        <dbReference type="ChEBI" id="CHEBI:57792"/>
    </ligand>
</feature>
<feature type="binding site" evidence="1">
    <location>
        <position position="200"/>
    </location>
    <ligand>
        <name>3-amino-2-oxopropyl phosphate</name>
        <dbReference type="ChEBI" id="CHEBI:57279"/>
    </ligand>
</feature>
<feature type="binding site" evidence="1">
    <location>
        <begin position="221"/>
        <end position="222"/>
    </location>
    <ligand>
        <name>3-amino-2-oxopropyl phosphate</name>
        <dbReference type="ChEBI" id="CHEBI:57279"/>
    </ligand>
</feature>
<feature type="site" description="Transition state stabilizer" evidence="1">
    <location>
        <position position="156"/>
    </location>
</feature>
<dbReference type="EC" id="2.6.99.2" evidence="1"/>
<dbReference type="EMBL" id="CP000301">
    <property type="protein sequence ID" value="ABD88187.1"/>
    <property type="molecule type" value="Genomic_DNA"/>
</dbReference>
<dbReference type="SMR" id="Q214J9"/>
<dbReference type="STRING" id="316056.RPC_2637"/>
<dbReference type="KEGG" id="rpc:RPC_2637"/>
<dbReference type="eggNOG" id="COG0854">
    <property type="taxonomic scope" value="Bacteria"/>
</dbReference>
<dbReference type="HOGENOM" id="CLU_074563_0_0_5"/>
<dbReference type="OrthoDB" id="9806590at2"/>
<dbReference type="UniPathway" id="UPA00244">
    <property type="reaction ID" value="UER00313"/>
</dbReference>
<dbReference type="GO" id="GO:0005829">
    <property type="term" value="C:cytosol"/>
    <property type="evidence" value="ECO:0007669"/>
    <property type="project" value="TreeGrafter"/>
</dbReference>
<dbReference type="GO" id="GO:0033856">
    <property type="term" value="F:pyridoxine 5'-phosphate synthase activity"/>
    <property type="evidence" value="ECO:0007669"/>
    <property type="project" value="UniProtKB-EC"/>
</dbReference>
<dbReference type="GO" id="GO:0008615">
    <property type="term" value="P:pyridoxine biosynthetic process"/>
    <property type="evidence" value="ECO:0007669"/>
    <property type="project" value="UniProtKB-UniRule"/>
</dbReference>
<dbReference type="CDD" id="cd00003">
    <property type="entry name" value="PNPsynthase"/>
    <property type="match status" value="1"/>
</dbReference>
<dbReference type="FunFam" id="3.20.20.70:FF:000150">
    <property type="entry name" value="Pyridoxine 5'-phosphate synthase"/>
    <property type="match status" value="1"/>
</dbReference>
<dbReference type="Gene3D" id="3.20.20.70">
    <property type="entry name" value="Aldolase class I"/>
    <property type="match status" value="1"/>
</dbReference>
<dbReference type="HAMAP" id="MF_00279">
    <property type="entry name" value="PdxJ"/>
    <property type="match status" value="1"/>
</dbReference>
<dbReference type="InterPro" id="IPR013785">
    <property type="entry name" value="Aldolase_TIM"/>
</dbReference>
<dbReference type="InterPro" id="IPR004569">
    <property type="entry name" value="PyrdxlP_synth_PdxJ"/>
</dbReference>
<dbReference type="InterPro" id="IPR036130">
    <property type="entry name" value="Pyridoxine-5'_phos_synth"/>
</dbReference>
<dbReference type="NCBIfam" id="TIGR00559">
    <property type="entry name" value="pdxJ"/>
    <property type="match status" value="1"/>
</dbReference>
<dbReference type="NCBIfam" id="NF003624">
    <property type="entry name" value="PRK05265.1-2"/>
    <property type="match status" value="1"/>
</dbReference>
<dbReference type="NCBIfam" id="NF003625">
    <property type="entry name" value="PRK05265.1-3"/>
    <property type="match status" value="1"/>
</dbReference>
<dbReference type="NCBIfam" id="NF003627">
    <property type="entry name" value="PRK05265.1-5"/>
    <property type="match status" value="1"/>
</dbReference>
<dbReference type="PANTHER" id="PTHR30456">
    <property type="entry name" value="PYRIDOXINE 5'-PHOSPHATE SYNTHASE"/>
    <property type="match status" value="1"/>
</dbReference>
<dbReference type="PANTHER" id="PTHR30456:SF0">
    <property type="entry name" value="PYRIDOXINE 5'-PHOSPHATE SYNTHASE"/>
    <property type="match status" value="1"/>
</dbReference>
<dbReference type="Pfam" id="PF03740">
    <property type="entry name" value="PdxJ"/>
    <property type="match status" value="1"/>
</dbReference>
<dbReference type="SUPFAM" id="SSF63892">
    <property type="entry name" value="Pyridoxine 5'-phosphate synthase"/>
    <property type="match status" value="1"/>
</dbReference>
<name>PDXJ_RHOPB</name>
<organism>
    <name type="scientific">Rhodopseudomonas palustris (strain BisB18)</name>
    <dbReference type="NCBI Taxonomy" id="316056"/>
    <lineage>
        <taxon>Bacteria</taxon>
        <taxon>Pseudomonadati</taxon>
        <taxon>Pseudomonadota</taxon>
        <taxon>Alphaproteobacteria</taxon>
        <taxon>Hyphomicrobiales</taxon>
        <taxon>Nitrobacteraceae</taxon>
        <taxon>Rhodopseudomonas</taxon>
    </lineage>
</organism>
<reference key="1">
    <citation type="submission" date="2006-03" db="EMBL/GenBank/DDBJ databases">
        <title>Complete sequence of Rhodopseudomonas palustris BisB18.</title>
        <authorList>
            <consortium name="US DOE Joint Genome Institute"/>
            <person name="Copeland A."/>
            <person name="Lucas S."/>
            <person name="Lapidus A."/>
            <person name="Barry K."/>
            <person name="Detter J.C."/>
            <person name="Glavina del Rio T."/>
            <person name="Hammon N."/>
            <person name="Israni S."/>
            <person name="Dalin E."/>
            <person name="Tice H."/>
            <person name="Pitluck S."/>
            <person name="Chain P."/>
            <person name="Malfatti S."/>
            <person name="Shin M."/>
            <person name="Vergez L."/>
            <person name="Schmutz J."/>
            <person name="Larimer F."/>
            <person name="Land M."/>
            <person name="Hauser L."/>
            <person name="Pelletier D.A."/>
            <person name="Kyrpides N."/>
            <person name="Anderson I."/>
            <person name="Oda Y."/>
            <person name="Harwood C.S."/>
            <person name="Richardson P."/>
        </authorList>
    </citation>
    <scope>NUCLEOTIDE SEQUENCE [LARGE SCALE GENOMIC DNA]</scope>
    <source>
        <strain>BisB18</strain>
    </source>
</reference>
<evidence type="ECO:0000255" key="1">
    <source>
        <dbReference type="HAMAP-Rule" id="MF_00279"/>
    </source>
</evidence>